<accession>Q252V4</accession>
<name>RL4_CHLFF</name>
<comment type="function">
    <text evidence="1">One of the primary rRNA binding proteins, this protein initially binds near the 5'-end of the 23S rRNA. It is important during the early stages of 50S assembly. It makes multiple contacts with different domains of the 23S rRNA in the assembled 50S subunit and ribosome.</text>
</comment>
<comment type="function">
    <text evidence="1">Forms part of the polypeptide exit tunnel.</text>
</comment>
<comment type="subunit">
    <text evidence="1">Part of the 50S ribosomal subunit.</text>
</comment>
<comment type="similarity">
    <text evidence="1">Belongs to the universal ribosomal protein uL4 family.</text>
</comment>
<dbReference type="EMBL" id="AP006861">
    <property type="protein sequence ID" value="BAE81684.1"/>
    <property type="molecule type" value="Genomic_DNA"/>
</dbReference>
<dbReference type="RefSeq" id="WP_011458457.1">
    <property type="nucleotide sequence ID" value="NC_007899.1"/>
</dbReference>
<dbReference type="SMR" id="Q252V4"/>
<dbReference type="STRING" id="264202.CF0912"/>
<dbReference type="KEGG" id="cfe:CF0912"/>
<dbReference type="eggNOG" id="COG0088">
    <property type="taxonomic scope" value="Bacteria"/>
</dbReference>
<dbReference type="HOGENOM" id="CLU_041575_5_2_0"/>
<dbReference type="OrthoDB" id="9803201at2"/>
<dbReference type="Proteomes" id="UP000001260">
    <property type="component" value="Chromosome"/>
</dbReference>
<dbReference type="GO" id="GO:1990904">
    <property type="term" value="C:ribonucleoprotein complex"/>
    <property type="evidence" value="ECO:0007669"/>
    <property type="project" value="UniProtKB-KW"/>
</dbReference>
<dbReference type="GO" id="GO:0005840">
    <property type="term" value="C:ribosome"/>
    <property type="evidence" value="ECO:0007669"/>
    <property type="project" value="UniProtKB-KW"/>
</dbReference>
<dbReference type="GO" id="GO:0019843">
    <property type="term" value="F:rRNA binding"/>
    <property type="evidence" value="ECO:0007669"/>
    <property type="project" value="UniProtKB-UniRule"/>
</dbReference>
<dbReference type="GO" id="GO:0003735">
    <property type="term" value="F:structural constituent of ribosome"/>
    <property type="evidence" value="ECO:0007669"/>
    <property type="project" value="InterPro"/>
</dbReference>
<dbReference type="GO" id="GO:0006412">
    <property type="term" value="P:translation"/>
    <property type="evidence" value="ECO:0007669"/>
    <property type="project" value="UniProtKB-UniRule"/>
</dbReference>
<dbReference type="Gene3D" id="3.40.1370.10">
    <property type="match status" value="1"/>
</dbReference>
<dbReference type="HAMAP" id="MF_01328_B">
    <property type="entry name" value="Ribosomal_uL4_B"/>
    <property type="match status" value="1"/>
</dbReference>
<dbReference type="InterPro" id="IPR002136">
    <property type="entry name" value="Ribosomal_uL4"/>
</dbReference>
<dbReference type="InterPro" id="IPR013005">
    <property type="entry name" value="Ribosomal_uL4-like"/>
</dbReference>
<dbReference type="InterPro" id="IPR023574">
    <property type="entry name" value="Ribosomal_uL4_dom_sf"/>
</dbReference>
<dbReference type="NCBIfam" id="TIGR03953">
    <property type="entry name" value="rplD_bact"/>
    <property type="match status" value="1"/>
</dbReference>
<dbReference type="PANTHER" id="PTHR10746">
    <property type="entry name" value="50S RIBOSOMAL PROTEIN L4"/>
    <property type="match status" value="1"/>
</dbReference>
<dbReference type="PANTHER" id="PTHR10746:SF6">
    <property type="entry name" value="LARGE RIBOSOMAL SUBUNIT PROTEIN UL4M"/>
    <property type="match status" value="1"/>
</dbReference>
<dbReference type="Pfam" id="PF00573">
    <property type="entry name" value="Ribosomal_L4"/>
    <property type="match status" value="1"/>
</dbReference>
<dbReference type="SUPFAM" id="SSF52166">
    <property type="entry name" value="Ribosomal protein L4"/>
    <property type="match status" value="1"/>
</dbReference>
<sequence>MVLLSKFDFFGNKAGEVELPDAFFAQEGNGLQLVKDYIVAIRANKRQWSACTRNRSEVSHSTKKPFRQKGTGNARQGCLAAPQFRGGGIVFGPKPKFDQHVRINKKEKRAAIRLLLSQKIQTNRLIVADDSVFTKSLTAPKTKEALRFLKSCNVECRGVLFIDDLNHAQNNEGLRLSLRNLPAVRGFAYGMNVNGYDLVSARNIVISEKALTGLVGHLTSGTKD</sequence>
<proteinExistence type="inferred from homology"/>
<evidence type="ECO:0000255" key="1">
    <source>
        <dbReference type="HAMAP-Rule" id="MF_01328"/>
    </source>
</evidence>
<evidence type="ECO:0000256" key="2">
    <source>
        <dbReference type="SAM" id="MobiDB-lite"/>
    </source>
</evidence>
<evidence type="ECO:0000305" key="3"/>
<feature type="chain" id="PRO_0000242360" description="Large ribosomal subunit protein uL4">
    <location>
        <begin position="1"/>
        <end position="224"/>
    </location>
</feature>
<feature type="region of interest" description="Disordered" evidence="2">
    <location>
        <begin position="54"/>
        <end position="73"/>
    </location>
</feature>
<keyword id="KW-0687">Ribonucleoprotein</keyword>
<keyword id="KW-0689">Ribosomal protein</keyword>
<keyword id="KW-0694">RNA-binding</keyword>
<keyword id="KW-0699">rRNA-binding</keyword>
<protein>
    <recommendedName>
        <fullName evidence="1">Large ribosomal subunit protein uL4</fullName>
    </recommendedName>
    <alternativeName>
        <fullName evidence="3">50S ribosomal protein L4</fullName>
    </alternativeName>
</protein>
<gene>
    <name evidence="1" type="primary">rplD</name>
    <name type="ordered locus">CF0912</name>
</gene>
<reference key="1">
    <citation type="journal article" date="2006" name="DNA Res.">
        <title>Genome sequence of the cat pathogen, Chlamydophila felis.</title>
        <authorList>
            <person name="Azuma Y."/>
            <person name="Hirakawa H."/>
            <person name="Yamashita A."/>
            <person name="Cai Y."/>
            <person name="Rahman M.A."/>
            <person name="Suzuki H."/>
            <person name="Mitaku S."/>
            <person name="Toh H."/>
            <person name="Goto S."/>
            <person name="Murakami T."/>
            <person name="Sugi K."/>
            <person name="Hayashi H."/>
            <person name="Fukushi H."/>
            <person name="Hattori M."/>
            <person name="Kuhara S."/>
            <person name="Shirai M."/>
        </authorList>
    </citation>
    <scope>NUCLEOTIDE SEQUENCE [LARGE SCALE GENOMIC DNA]</scope>
    <source>
        <strain>Fe/C-56</strain>
    </source>
</reference>
<organism>
    <name type="scientific">Chlamydia felis (strain Fe/C-56)</name>
    <name type="common">Chlamydophila felis</name>
    <dbReference type="NCBI Taxonomy" id="264202"/>
    <lineage>
        <taxon>Bacteria</taxon>
        <taxon>Pseudomonadati</taxon>
        <taxon>Chlamydiota</taxon>
        <taxon>Chlamydiia</taxon>
        <taxon>Chlamydiales</taxon>
        <taxon>Chlamydiaceae</taxon>
        <taxon>Chlamydia/Chlamydophila group</taxon>
        <taxon>Chlamydia</taxon>
    </lineage>
</organism>